<reference key="1">
    <citation type="submission" date="1995-05" db="EMBL/GenBank/DDBJ databases">
        <title>Cloning and sequencing analysis of Dictyostelium discoideum cDNA encoding cystathionine beta synthase.</title>
        <authorList>
            <person name="Jho E."/>
            <person name="Kopachik W."/>
        </authorList>
    </citation>
    <scope>NUCLEOTIDE SEQUENCE [MRNA]</scope>
    <source>
        <strain>AX3</strain>
    </source>
</reference>
<reference key="2">
    <citation type="journal article" date="2005" name="Nature">
        <title>The genome of the social amoeba Dictyostelium discoideum.</title>
        <authorList>
            <person name="Eichinger L."/>
            <person name="Pachebat J.A."/>
            <person name="Gloeckner G."/>
            <person name="Rajandream M.A."/>
            <person name="Sucgang R."/>
            <person name="Berriman M."/>
            <person name="Song J."/>
            <person name="Olsen R."/>
            <person name="Szafranski K."/>
            <person name="Xu Q."/>
            <person name="Tunggal B."/>
            <person name="Kummerfeld S."/>
            <person name="Madera M."/>
            <person name="Konfortov B.A."/>
            <person name="Rivero F."/>
            <person name="Bankier A.T."/>
            <person name="Lehmann R."/>
            <person name="Hamlin N."/>
            <person name="Davies R."/>
            <person name="Gaudet P."/>
            <person name="Fey P."/>
            <person name="Pilcher K."/>
            <person name="Chen G."/>
            <person name="Saunders D."/>
            <person name="Sodergren E.J."/>
            <person name="Davis P."/>
            <person name="Kerhornou A."/>
            <person name="Nie X."/>
            <person name="Hall N."/>
            <person name="Anjard C."/>
            <person name="Hemphill L."/>
            <person name="Bason N."/>
            <person name="Farbrother P."/>
            <person name="Desany B."/>
            <person name="Just E."/>
            <person name="Morio T."/>
            <person name="Rost R."/>
            <person name="Churcher C.M."/>
            <person name="Cooper J."/>
            <person name="Haydock S."/>
            <person name="van Driessche N."/>
            <person name="Cronin A."/>
            <person name="Goodhead I."/>
            <person name="Muzny D.M."/>
            <person name="Mourier T."/>
            <person name="Pain A."/>
            <person name="Lu M."/>
            <person name="Harper D."/>
            <person name="Lindsay R."/>
            <person name="Hauser H."/>
            <person name="James K.D."/>
            <person name="Quiles M."/>
            <person name="Madan Babu M."/>
            <person name="Saito T."/>
            <person name="Buchrieser C."/>
            <person name="Wardroper A."/>
            <person name="Felder M."/>
            <person name="Thangavelu M."/>
            <person name="Johnson D."/>
            <person name="Knights A."/>
            <person name="Loulseged H."/>
            <person name="Mungall K.L."/>
            <person name="Oliver K."/>
            <person name="Price C."/>
            <person name="Quail M.A."/>
            <person name="Urushihara H."/>
            <person name="Hernandez J."/>
            <person name="Rabbinowitsch E."/>
            <person name="Steffen D."/>
            <person name="Sanders M."/>
            <person name="Ma J."/>
            <person name="Kohara Y."/>
            <person name="Sharp S."/>
            <person name="Simmonds M.N."/>
            <person name="Spiegler S."/>
            <person name="Tivey A."/>
            <person name="Sugano S."/>
            <person name="White B."/>
            <person name="Walker D."/>
            <person name="Woodward J.R."/>
            <person name="Winckler T."/>
            <person name="Tanaka Y."/>
            <person name="Shaulsky G."/>
            <person name="Schleicher M."/>
            <person name="Weinstock G.M."/>
            <person name="Rosenthal A."/>
            <person name="Cox E.C."/>
            <person name="Chisholm R.L."/>
            <person name="Gibbs R.A."/>
            <person name="Loomis W.F."/>
            <person name="Platzer M."/>
            <person name="Kay R.R."/>
            <person name="Williams J.G."/>
            <person name="Dear P.H."/>
            <person name="Noegel A.A."/>
            <person name="Barrell B.G."/>
            <person name="Kuspa A."/>
        </authorList>
    </citation>
    <scope>NUCLEOTIDE SEQUENCE [LARGE SCALE GENOMIC DNA]</scope>
    <source>
        <strain>AX4</strain>
    </source>
</reference>
<proteinExistence type="evidence at transcript level"/>
<feature type="chain" id="PRO_0000167132" description="Cystathionine beta-synthase">
    <location>
        <begin position="1"/>
        <end position="498"/>
    </location>
</feature>
<feature type="domain" description="CBS 1" evidence="2">
    <location>
        <begin position="374"/>
        <end position="430"/>
    </location>
</feature>
<feature type="domain" description="CBS 2" evidence="2">
    <location>
        <begin position="435"/>
        <end position="497"/>
    </location>
</feature>
<feature type="region of interest" description="Disordered" evidence="3">
    <location>
        <begin position="1"/>
        <end position="25"/>
    </location>
</feature>
<feature type="compositionally biased region" description="Low complexity" evidence="3">
    <location>
        <begin position="11"/>
        <end position="22"/>
    </location>
</feature>
<feature type="binding site" evidence="1">
    <location>
        <position position="103"/>
    </location>
    <ligand>
        <name>pyridoxal 5'-phosphate</name>
        <dbReference type="ChEBI" id="CHEBI:597326"/>
    </ligand>
</feature>
<feature type="binding site" evidence="1">
    <location>
        <begin position="210"/>
        <end position="214"/>
    </location>
    <ligand>
        <name>pyridoxal 5'-phosphate</name>
        <dbReference type="ChEBI" id="CHEBI:597326"/>
    </ligand>
</feature>
<feature type="binding site" evidence="1">
    <location>
        <position position="302"/>
    </location>
    <ligand>
        <name>pyridoxal 5'-phosphate</name>
        <dbReference type="ChEBI" id="CHEBI:597326"/>
    </ligand>
</feature>
<feature type="modified residue" description="N6-(pyridoxal phosphate)lysine" evidence="1">
    <location>
        <position position="73"/>
    </location>
</feature>
<feature type="sequence conflict" description="In Ref. 1; AAA70099." evidence="4" ref="1">
    <original>A</original>
    <variation>G</variation>
    <location>
        <position position="140"/>
    </location>
</feature>
<feature type="sequence conflict" description="In Ref. 1; AAA70099." evidence="4" ref="1">
    <original>G</original>
    <variation>A</variation>
    <location>
        <position position="300"/>
    </location>
</feature>
<dbReference type="EC" id="4.2.1.22"/>
<dbReference type="EMBL" id="U27536">
    <property type="protein sequence ID" value="AAA70099.1"/>
    <property type="status" value="ALT_FRAME"/>
    <property type="molecule type" value="mRNA"/>
</dbReference>
<dbReference type="EMBL" id="AAFI02000003">
    <property type="protein sequence ID" value="EAL73145.1"/>
    <property type="molecule type" value="Genomic_DNA"/>
</dbReference>
<dbReference type="RefSeq" id="XP_647501.1">
    <property type="nucleotide sequence ID" value="XM_642409.1"/>
</dbReference>
<dbReference type="SMR" id="P46794"/>
<dbReference type="FunCoup" id="P46794">
    <property type="interactions" value="322"/>
</dbReference>
<dbReference type="STRING" id="44689.P46794"/>
<dbReference type="GlyGen" id="P46794">
    <property type="glycosylation" value="1 site"/>
</dbReference>
<dbReference type="PaxDb" id="44689-DDB0191292"/>
<dbReference type="EnsemblProtists" id="EAL73145">
    <property type="protein sequence ID" value="EAL73145"/>
    <property type="gene ID" value="DDB_G0267386"/>
</dbReference>
<dbReference type="GeneID" id="8616308"/>
<dbReference type="KEGG" id="ddi:DDB_G0267386"/>
<dbReference type="dictyBase" id="DDB_G0267386">
    <property type="gene designation" value="cysB"/>
</dbReference>
<dbReference type="VEuPathDB" id="AmoebaDB:DDB_G0267386"/>
<dbReference type="eggNOG" id="KOG1252">
    <property type="taxonomic scope" value="Eukaryota"/>
</dbReference>
<dbReference type="HOGENOM" id="CLU_021018_0_0_1"/>
<dbReference type="InParanoid" id="P46794"/>
<dbReference type="OMA" id="KFADDEW"/>
<dbReference type="PhylomeDB" id="P46794"/>
<dbReference type="Reactome" id="R-DDI-1614603">
    <property type="pathway name" value="Cysteine formation from homocysteine"/>
</dbReference>
<dbReference type="UniPathway" id="UPA00136">
    <property type="reaction ID" value="UER00201"/>
</dbReference>
<dbReference type="PRO" id="PR:P46794"/>
<dbReference type="Proteomes" id="UP000002195">
    <property type="component" value="Chromosome 1"/>
</dbReference>
<dbReference type="GO" id="GO:0005737">
    <property type="term" value="C:cytoplasm"/>
    <property type="evidence" value="ECO:0000250"/>
    <property type="project" value="dictyBase"/>
</dbReference>
<dbReference type="GO" id="GO:0004122">
    <property type="term" value="F:cystathionine beta-synthase activity"/>
    <property type="evidence" value="ECO:0000250"/>
    <property type="project" value="dictyBase"/>
</dbReference>
<dbReference type="GO" id="GO:0006535">
    <property type="term" value="P:cysteine biosynthetic process from serine"/>
    <property type="evidence" value="ECO:0000318"/>
    <property type="project" value="GO_Central"/>
</dbReference>
<dbReference type="GO" id="GO:0019343">
    <property type="term" value="P:cysteine biosynthetic process via cystathionine"/>
    <property type="evidence" value="ECO:0007669"/>
    <property type="project" value="InterPro"/>
</dbReference>
<dbReference type="GO" id="GO:0006534">
    <property type="term" value="P:cysteine metabolic process"/>
    <property type="evidence" value="ECO:0000250"/>
    <property type="project" value="dictyBase"/>
</dbReference>
<dbReference type="CDD" id="cd01561">
    <property type="entry name" value="CBS_like"/>
    <property type="match status" value="1"/>
</dbReference>
<dbReference type="CDD" id="cd04608">
    <property type="entry name" value="CBS_pair_CBS"/>
    <property type="match status" value="1"/>
</dbReference>
<dbReference type="FunFam" id="3.40.50.1100:FF:000003">
    <property type="entry name" value="Cystathionine beta-synthase"/>
    <property type="match status" value="1"/>
</dbReference>
<dbReference type="FunFam" id="3.40.50.1100:FF:000118">
    <property type="entry name" value="Related to CYS4-cystathionine beta-synthase"/>
    <property type="match status" value="1"/>
</dbReference>
<dbReference type="Gene3D" id="3.40.50.1100">
    <property type="match status" value="2"/>
</dbReference>
<dbReference type="Gene3D" id="3.10.580.10">
    <property type="entry name" value="CBS-domain"/>
    <property type="match status" value="1"/>
</dbReference>
<dbReference type="InterPro" id="IPR046353">
    <property type="entry name" value="CBS_C"/>
</dbReference>
<dbReference type="InterPro" id="IPR000644">
    <property type="entry name" value="CBS_dom"/>
</dbReference>
<dbReference type="InterPro" id="IPR046342">
    <property type="entry name" value="CBS_dom_sf"/>
</dbReference>
<dbReference type="InterPro" id="IPR050214">
    <property type="entry name" value="Cys_Synth/Cystath_Beta-Synth"/>
</dbReference>
<dbReference type="InterPro" id="IPR005857">
    <property type="entry name" value="Cysta_beta_synth"/>
</dbReference>
<dbReference type="InterPro" id="IPR001216">
    <property type="entry name" value="P-phosphate_BS"/>
</dbReference>
<dbReference type="InterPro" id="IPR001926">
    <property type="entry name" value="TrpB-like_PALP"/>
</dbReference>
<dbReference type="InterPro" id="IPR036052">
    <property type="entry name" value="TrpB-like_PALP_sf"/>
</dbReference>
<dbReference type="NCBIfam" id="TIGR01137">
    <property type="entry name" value="cysta_beta"/>
    <property type="match status" value="1"/>
</dbReference>
<dbReference type="PANTHER" id="PTHR10314">
    <property type="entry name" value="CYSTATHIONINE BETA-SYNTHASE"/>
    <property type="match status" value="1"/>
</dbReference>
<dbReference type="Pfam" id="PF00571">
    <property type="entry name" value="CBS"/>
    <property type="match status" value="2"/>
</dbReference>
<dbReference type="Pfam" id="PF00291">
    <property type="entry name" value="PALP"/>
    <property type="match status" value="1"/>
</dbReference>
<dbReference type="SMART" id="SM00116">
    <property type="entry name" value="CBS"/>
    <property type="match status" value="2"/>
</dbReference>
<dbReference type="SUPFAM" id="SSF54631">
    <property type="entry name" value="CBS-domain pair"/>
    <property type="match status" value="1"/>
</dbReference>
<dbReference type="SUPFAM" id="SSF53686">
    <property type="entry name" value="Tryptophan synthase beta subunit-like PLP-dependent enzymes"/>
    <property type="match status" value="1"/>
</dbReference>
<dbReference type="PROSITE" id="PS51371">
    <property type="entry name" value="CBS"/>
    <property type="match status" value="2"/>
</dbReference>
<dbReference type="PROSITE" id="PS00901">
    <property type="entry name" value="CYS_SYNTHASE"/>
    <property type="match status" value="1"/>
</dbReference>
<name>CBS_DICDI</name>
<protein>
    <recommendedName>
        <fullName>Cystathionine beta-synthase</fullName>
        <ecNumber>4.2.1.22</ecNumber>
    </recommendedName>
    <alternativeName>
        <fullName>Beta-thionase</fullName>
    </alternativeName>
    <alternativeName>
        <fullName>Serine sulfhydrase</fullName>
    </alternativeName>
</protein>
<organism>
    <name type="scientific">Dictyostelium discoideum</name>
    <name type="common">Social amoeba</name>
    <dbReference type="NCBI Taxonomy" id="44689"/>
    <lineage>
        <taxon>Eukaryota</taxon>
        <taxon>Amoebozoa</taxon>
        <taxon>Evosea</taxon>
        <taxon>Eumycetozoa</taxon>
        <taxon>Dictyostelia</taxon>
        <taxon>Dictyosteliales</taxon>
        <taxon>Dictyosteliaceae</taxon>
        <taxon>Dictyostelium</taxon>
    </lineage>
</organism>
<keyword id="KW-0028">Amino-acid biosynthesis</keyword>
<keyword id="KW-0129">CBS domain</keyword>
<keyword id="KW-0198">Cysteine biosynthesis</keyword>
<keyword id="KW-0456">Lyase</keyword>
<keyword id="KW-0663">Pyridoxal phosphate</keyword>
<keyword id="KW-1185">Reference proteome</keyword>
<keyword id="KW-0677">Repeat</keyword>
<gene>
    <name type="primary">cysB</name>
    <name type="ORF">DDB_G0267386</name>
</gene>
<evidence type="ECO:0000250" key="1"/>
<evidence type="ECO:0000255" key="2">
    <source>
        <dbReference type="PROSITE-ProRule" id="PRU00703"/>
    </source>
</evidence>
<evidence type="ECO:0000256" key="3">
    <source>
        <dbReference type="SAM" id="MobiDB-lite"/>
    </source>
</evidence>
<evidence type="ECO:0000305" key="4"/>
<accession>P46794</accession>
<accession>Q55FN2</accession>
<comment type="catalytic activity">
    <reaction>
        <text>L-homocysteine + L-serine = L,L-cystathionine + H2O</text>
        <dbReference type="Rhea" id="RHEA:10112"/>
        <dbReference type="ChEBI" id="CHEBI:15377"/>
        <dbReference type="ChEBI" id="CHEBI:33384"/>
        <dbReference type="ChEBI" id="CHEBI:58161"/>
        <dbReference type="ChEBI" id="CHEBI:58199"/>
        <dbReference type="EC" id="4.2.1.22"/>
    </reaction>
</comment>
<comment type="cofactor">
    <cofactor>
        <name>pyridoxal 5'-phosphate</name>
        <dbReference type="ChEBI" id="CHEBI:597326"/>
    </cofactor>
</comment>
<comment type="pathway">
    <text>Amino-acid biosynthesis; L-cysteine biosynthesis; L-cysteine from L-homocysteine and L-serine: step 1/2.</text>
</comment>
<comment type="similarity">
    <text evidence="4">Belongs to the cysteine synthase/cystathionine beta-synthase family.</text>
</comment>
<comment type="sequence caution" evidence="4">
    <conflict type="frameshift">
        <sequence resource="EMBL-CDS" id="AAA70099"/>
    </conflict>
</comment>
<sequence>MSAPEGPSKCTWTPNTTENTPHTTRRTPKKLIMDNILDNIGGTPLVRVNKVSSDLECELVAKCEFFNAGGSVKDRIGHRMIVDAEESGRIKKGDTLIEPTSGNTGIGLALTAAIKGYKMIITLPEKMSQEKVDVLKALGAEIIRTPTEAAFDAPESHIGVAKKLNSEIPNSHILDQYGNPSNPLAHYDGTAEELLEQCEGKIDMIVCTAGTGGTITGIARKIKERLPNCIVVGVDPHGSILAQPESLNNTNKSYKIEGIGYDFIPNVLERKLVDQWIKTDDKESFIMARRLIKEEGLLCGGSSGSAMVGALLAAKQLKKGQRCVVLLADSIRNYMTKHLNDDWLVDNGFVDPEYKTKDQQEEEKYHGATVKDLTLPKPITISATTTCAAAVQLLQQYGFDQLPVVSESKKVLGQLTLGNLLSHIASKKAVPTDAVSKVMFRFTKNEKYIPITQSTSLATLSKFFENHSSAIVTENDEIISIVTKIDLLTYLMKSQQKN</sequence>